<protein>
    <recommendedName>
        <fullName evidence="1">Erythronate-4-phosphate dehydrogenase</fullName>
        <ecNumber evidence="1">1.1.1.290</ecNumber>
    </recommendedName>
</protein>
<evidence type="ECO:0000255" key="1">
    <source>
        <dbReference type="HAMAP-Rule" id="MF_01825"/>
    </source>
</evidence>
<organism>
    <name type="scientific">Escherichia coli O139:H28 (strain E24377A / ETEC)</name>
    <dbReference type="NCBI Taxonomy" id="331111"/>
    <lineage>
        <taxon>Bacteria</taxon>
        <taxon>Pseudomonadati</taxon>
        <taxon>Pseudomonadota</taxon>
        <taxon>Gammaproteobacteria</taxon>
        <taxon>Enterobacterales</taxon>
        <taxon>Enterobacteriaceae</taxon>
        <taxon>Escherichia</taxon>
    </lineage>
</organism>
<accession>A7ZPD6</accession>
<dbReference type="EC" id="1.1.1.290" evidence="1"/>
<dbReference type="EMBL" id="CP000800">
    <property type="protein sequence ID" value="ABV21185.1"/>
    <property type="molecule type" value="Genomic_DNA"/>
</dbReference>
<dbReference type="RefSeq" id="WP_000699182.1">
    <property type="nucleotide sequence ID" value="NC_009801.1"/>
</dbReference>
<dbReference type="SMR" id="A7ZPD6"/>
<dbReference type="KEGG" id="ecw:EcE24377A_2614"/>
<dbReference type="HOGENOM" id="CLU_019796_4_0_6"/>
<dbReference type="UniPathway" id="UPA00244">
    <property type="reaction ID" value="UER00310"/>
</dbReference>
<dbReference type="Proteomes" id="UP000001122">
    <property type="component" value="Chromosome"/>
</dbReference>
<dbReference type="GO" id="GO:0005829">
    <property type="term" value="C:cytosol"/>
    <property type="evidence" value="ECO:0007669"/>
    <property type="project" value="UniProtKB-ARBA"/>
</dbReference>
<dbReference type="GO" id="GO:0033711">
    <property type="term" value="F:4-phosphoerythronate dehydrogenase activity"/>
    <property type="evidence" value="ECO:0007669"/>
    <property type="project" value="UniProtKB-EC"/>
</dbReference>
<dbReference type="GO" id="GO:0051287">
    <property type="term" value="F:NAD binding"/>
    <property type="evidence" value="ECO:0007669"/>
    <property type="project" value="InterPro"/>
</dbReference>
<dbReference type="GO" id="GO:0046983">
    <property type="term" value="F:protein dimerization activity"/>
    <property type="evidence" value="ECO:0007669"/>
    <property type="project" value="InterPro"/>
</dbReference>
<dbReference type="GO" id="GO:0036001">
    <property type="term" value="P:'de novo' pyridoxal 5'-phosphate biosynthetic process"/>
    <property type="evidence" value="ECO:0007669"/>
    <property type="project" value="TreeGrafter"/>
</dbReference>
<dbReference type="GO" id="GO:0008615">
    <property type="term" value="P:pyridoxine biosynthetic process"/>
    <property type="evidence" value="ECO:0007669"/>
    <property type="project" value="UniProtKB-UniRule"/>
</dbReference>
<dbReference type="CDD" id="cd12158">
    <property type="entry name" value="ErythrP_dh"/>
    <property type="match status" value="1"/>
</dbReference>
<dbReference type="FunFam" id="3.30.1370.170:FF:000001">
    <property type="entry name" value="Erythronate-4-phosphate dehydrogenase"/>
    <property type="match status" value="1"/>
</dbReference>
<dbReference type="FunFam" id="3.40.50.720:FF:000093">
    <property type="entry name" value="Erythronate-4-phosphate dehydrogenase"/>
    <property type="match status" value="1"/>
</dbReference>
<dbReference type="Gene3D" id="3.30.1370.170">
    <property type="match status" value="1"/>
</dbReference>
<dbReference type="Gene3D" id="3.40.50.720">
    <property type="entry name" value="NAD(P)-binding Rossmann-like Domain"/>
    <property type="match status" value="2"/>
</dbReference>
<dbReference type="HAMAP" id="MF_01825">
    <property type="entry name" value="PdxB"/>
    <property type="match status" value="1"/>
</dbReference>
<dbReference type="InterPro" id="IPR006139">
    <property type="entry name" value="D-isomer_2_OHA_DH_cat_dom"/>
</dbReference>
<dbReference type="InterPro" id="IPR029753">
    <property type="entry name" value="D-isomer_DH_CS"/>
</dbReference>
<dbReference type="InterPro" id="IPR029752">
    <property type="entry name" value="D-isomer_DH_CS1"/>
</dbReference>
<dbReference type="InterPro" id="IPR006140">
    <property type="entry name" value="D-isomer_DH_NAD-bd"/>
</dbReference>
<dbReference type="InterPro" id="IPR020921">
    <property type="entry name" value="Erythronate-4-P_DHase"/>
</dbReference>
<dbReference type="InterPro" id="IPR024531">
    <property type="entry name" value="Erythronate-4-P_DHase_dimer"/>
</dbReference>
<dbReference type="InterPro" id="IPR036291">
    <property type="entry name" value="NAD(P)-bd_dom_sf"/>
</dbReference>
<dbReference type="InterPro" id="IPR038251">
    <property type="entry name" value="PdxB_dimer_sf"/>
</dbReference>
<dbReference type="NCBIfam" id="NF001309">
    <property type="entry name" value="PRK00257.1"/>
    <property type="match status" value="1"/>
</dbReference>
<dbReference type="NCBIfam" id="NF011966">
    <property type="entry name" value="PRK15438.1"/>
    <property type="match status" value="1"/>
</dbReference>
<dbReference type="PANTHER" id="PTHR42938">
    <property type="entry name" value="FORMATE DEHYDROGENASE 1"/>
    <property type="match status" value="1"/>
</dbReference>
<dbReference type="PANTHER" id="PTHR42938:SF9">
    <property type="entry name" value="FORMATE DEHYDROGENASE 1"/>
    <property type="match status" value="1"/>
</dbReference>
<dbReference type="Pfam" id="PF00389">
    <property type="entry name" value="2-Hacid_dh"/>
    <property type="match status" value="1"/>
</dbReference>
<dbReference type="Pfam" id="PF02826">
    <property type="entry name" value="2-Hacid_dh_C"/>
    <property type="match status" value="1"/>
</dbReference>
<dbReference type="Pfam" id="PF11890">
    <property type="entry name" value="DUF3410"/>
    <property type="match status" value="1"/>
</dbReference>
<dbReference type="SUPFAM" id="SSF52283">
    <property type="entry name" value="Formate/glycerate dehydrogenase catalytic domain-like"/>
    <property type="match status" value="1"/>
</dbReference>
<dbReference type="SUPFAM" id="SSF51735">
    <property type="entry name" value="NAD(P)-binding Rossmann-fold domains"/>
    <property type="match status" value="1"/>
</dbReference>
<dbReference type="PROSITE" id="PS00065">
    <property type="entry name" value="D_2_HYDROXYACID_DH_1"/>
    <property type="match status" value="1"/>
</dbReference>
<dbReference type="PROSITE" id="PS00671">
    <property type="entry name" value="D_2_HYDROXYACID_DH_3"/>
    <property type="match status" value="1"/>
</dbReference>
<reference key="1">
    <citation type="journal article" date="2008" name="J. Bacteriol.">
        <title>The pangenome structure of Escherichia coli: comparative genomic analysis of E. coli commensal and pathogenic isolates.</title>
        <authorList>
            <person name="Rasko D.A."/>
            <person name="Rosovitz M.J."/>
            <person name="Myers G.S.A."/>
            <person name="Mongodin E.F."/>
            <person name="Fricke W.F."/>
            <person name="Gajer P."/>
            <person name="Crabtree J."/>
            <person name="Sebaihia M."/>
            <person name="Thomson N.R."/>
            <person name="Chaudhuri R."/>
            <person name="Henderson I.R."/>
            <person name="Sperandio V."/>
            <person name="Ravel J."/>
        </authorList>
    </citation>
    <scope>NUCLEOTIDE SEQUENCE [LARGE SCALE GENOMIC DNA]</scope>
    <source>
        <strain>E24377A / ETEC</strain>
    </source>
</reference>
<feature type="chain" id="PRO_1000088417" description="Erythronate-4-phosphate dehydrogenase">
    <location>
        <begin position="1"/>
        <end position="378"/>
    </location>
</feature>
<feature type="active site" evidence="1">
    <location>
        <position position="208"/>
    </location>
</feature>
<feature type="active site" evidence="1">
    <location>
        <position position="237"/>
    </location>
</feature>
<feature type="active site" description="Proton donor" evidence="1">
    <location>
        <position position="254"/>
    </location>
</feature>
<feature type="binding site" evidence="1">
    <location>
        <position position="45"/>
    </location>
    <ligand>
        <name>substrate</name>
    </ligand>
</feature>
<feature type="binding site" evidence="1">
    <location>
        <position position="66"/>
    </location>
    <ligand>
        <name>substrate</name>
    </ligand>
</feature>
<feature type="binding site" evidence="1">
    <location>
        <position position="146"/>
    </location>
    <ligand>
        <name>NAD(+)</name>
        <dbReference type="ChEBI" id="CHEBI:57540"/>
    </ligand>
</feature>
<feature type="binding site" evidence="1">
    <location>
        <position position="175"/>
    </location>
    <ligand>
        <name>NAD(+)</name>
        <dbReference type="ChEBI" id="CHEBI:57540"/>
    </ligand>
</feature>
<feature type="binding site" evidence="1">
    <location>
        <position position="232"/>
    </location>
    <ligand>
        <name>NAD(+)</name>
        <dbReference type="ChEBI" id="CHEBI:57540"/>
    </ligand>
</feature>
<feature type="binding site" evidence="1">
    <location>
        <position position="257"/>
    </location>
    <ligand>
        <name>NAD(+)</name>
        <dbReference type="ChEBI" id="CHEBI:57540"/>
    </ligand>
</feature>
<feature type="binding site" evidence="1">
    <location>
        <position position="258"/>
    </location>
    <ligand>
        <name>substrate</name>
    </ligand>
</feature>
<keyword id="KW-0963">Cytoplasm</keyword>
<keyword id="KW-0520">NAD</keyword>
<keyword id="KW-0560">Oxidoreductase</keyword>
<keyword id="KW-0664">Pyridoxine biosynthesis</keyword>
<keyword id="KW-1185">Reference proteome</keyword>
<sequence length="378" mass="41516">MKILVDENMPYARELFSRLGEVKAVPGRPIPVVQLDDADALMVRSVTKVNESLLAGKPIKFVGTATAGTDHVDEVWLKQAGIGFSAAPGCNAIAVVEYVFSSLLMLAERDGFSLHERTVGIVGVGNVGRRLQARLEVLGIKTLLCDPPRADRGDEGDFRSLDELVQHADILTFHTPLFKDGPYKTLHLADEKLIRSLKPGAILINACRGAVVDNTALLTCLNEGQKLSVVLDVWEGEPELNVELLKKVDIGTPHIAGYTLEGKARGTTQVFEAYSKFIGHEQHVALDTLLPAPEFGRITLHGPLDQPTLKRLVHLVYDVRRDDAPLRKVAGIPGEFDKLRKNYLERREWSSLYVICDDASAASLLCKLGFNAVHHPAR</sequence>
<proteinExistence type="inferred from homology"/>
<gene>
    <name evidence="1" type="primary">pdxB</name>
    <name type="ordered locus">EcE24377A_2614</name>
</gene>
<name>PDXB_ECO24</name>
<comment type="function">
    <text evidence="1">Catalyzes the oxidation of erythronate-4-phosphate to 3-hydroxy-2-oxo-4-phosphonooxybutanoate.</text>
</comment>
<comment type="catalytic activity">
    <reaction evidence="1">
        <text>4-phospho-D-erythronate + NAD(+) = (R)-3-hydroxy-2-oxo-4-phosphooxybutanoate + NADH + H(+)</text>
        <dbReference type="Rhea" id="RHEA:18829"/>
        <dbReference type="ChEBI" id="CHEBI:15378"/>
        <dbReference type="ChEBI" id="CHEBI:57540"/>
        <dbReference type="ChEBI" id="CHEBI:57945"/>
        <dbReference type="ChEBI" id="CHEBI:58538"/>
        <dbReference type="ChEBI" id="CHEBI:58766"/>
        <dbReference type="EC" id="1.1.1.290"/>
    </reaction>
</comment>
<comment type="pathway">
    <text evidence="1">Cofactor biosynthesis; pyridoxine 5'-phosphate biosynthesis; pyridoxine 5'-phosphate from D-erythrose 4-phosphate: step 2/5.</text>
</comment>
<comment type="subunit">
    <text evidence="1">Homodimer.</text>
</comment>
<comment type="subcellular location">
    <subcellularLocation>
        <location evidence="1">Cytoplasm</location>
    </subcellularLocation>
</comment>
<comment type="similarity">
    <text evidence="1">Belongs to the D-isomer specific 2-hydroxyacid dehydrogenase family. PdxB subfamily.</text>
</comment>